<reference key="1">
    <citation type="journal article" date="2003" name="Mol. Microbiol.">
        <title>Genome-based analysis of virulence genes in a non-biofilm-forming Staphylococcus epidermidis strain (ATCC 12228).</title>
        <authorList>
            <person name="Zhang Y.-Q."/>
            <person name="Ren S.-X."/>
            <person name="Li H.-L."/>
            <person name="Wang Y.-X."/>
            <person name="Fu G."/>
            <person name="Yang J."/>
            <person name="Qin Z.-Q."/>
            <person name="Miao Y.-G."/>
            <person name="Wang W.-Y."/>
            <person name="Chen R.-S."/>
            <person name="Shen Y."/>
            <person name="Chen Z."/>
            <person name="Yuan Z.-H."/>
            <person name="Zhao G.-P."/>
            <person name="Qu D."/>
            <person name="Danchin A."/>
            <person name="Wen Y.-M."/>
        </authorList>
    </citation>
    <scope>NUCLEOTIDE SEQUENCE [LARGE SCALE GENOMIC DNA]</scope>
    <source>
        <strain>ATCC 12228 / FDA PCI 1200</strain>
    </source>
</reference>
<comment type="similarity">
    <text evidence="1">Belongs to the OsmC/Ohr family.</text>
</comment>
<proteinExistence type="inferred from homology"/>
<feature type="chain" id="PRO_0000288963" description="Organic hydroperoxide resistance protein-like 2">
    <location>
        <begin position="1"/>
        <end position="142"/>
    </location>
</feature>
<name>OHRL2_STAES</name>
<dbReference type="EMBL" id="AE015929">
    <property type="protein sequence ID" value="AAO05875.1"/>
    <property type="molecule type" value="Genomic_DNA"/>
</dbReference>
<dbReference type="RefSeq" id="NP_765788.1">
    <property type="nucleotide sequence ID" value="NC_004461.1"/>
</dbReference>
<dbReference type="RefSeq" id="WP_001831844.1">
    <property type="nucleotide sequence ID" value="NZ_WBME01000025.1"/>
</dbReference>
<dbReference type="SMR" id="Q8CMV4"/>
<dbReference type="KEGG" id="sep:SE_2233"/>
<dbReference type="PATRIC" id="fig|176280.10.peg.2180"/>
<dbReference type="eggNOG" id="COG1764">
    <property type="taxonomic scope" value="Bacteria"/>
</dbReference>
<dbReference type="HOGENOM" id="CLU_106355_2_1_9"/>
<dbReference type="OrthoDB" id="9797508at2"/>
<dbReference type="Proteomes" id="UP000001411">
    <property type="component" value="Chromosome"/>
</dbReference>
<dbReference type="GO" id="GO:0006979">
    <property type="term" value="P:response to oxidative stress"/>
    <property type="evidence" value="ECO:0007669"/>
    <property type="project" value="InterPro"/>
</dbReference>
<dbReference type="Gene3D" id="2.20.25.10">
    <property type="match status" value="1"/>
</dbReference>
<dbReference type="Gene3D" id="3.30.300.20">
    <property type="match status" value="1"/>
</dbReference>
<dbReference type="InterPro" id="IPR015946">
    <property type="entry name" value="KH_dom-like_a/b"/>
</dbReference>
<dbReference type="InterPro" id="IPR019953">
    <property type="entry name" value="OHR"/>
</dbReference>
<dbReference type="InterPro" id="IPR003718">
    <property type="entry name" value="OsmC/Ohr_fam"/>
</dbReference>
<dbReference type="InterPro" id="IPR036102">
    <property type="entry name" value="OsmC/Ohrsf"/>
</dbReference>
<dbReference type="NCBIfam" id="TIGR03561">
    <property type="entry name" value="organ_hyd_perox"/>
    <property type="match status" value="1"/>
</dbReference>
<dbReference type="PANTHER" id="PTHR33797">
    <property type="entry name" value="ORGANIC HYDROPEROXIDE RESISTANCE PROTEIN-LIKE"/>
    <property type="match status" value="1"/>
</dbReference>
<dbReference type="PANTHER" id="PTHR33797:SF2">
    <property type="entry name" value="ORGANIC HYDROPEROXIDE RESISTANCE PROTEIN-LIKE"/>
    <property type="match status" value="1"/>
</dbReference>
<dbReference type="Pfam" id="PF02566">
    <property type="entry name" value="OsmC"/>
    <property type="match status" value="1"/>
</dbReference>
<dbReference type="SUPFAM" id="SSF82784">
    <property type="entry name" value="OsmC-like"/>
    <property type="match status" value="1"/>
</dbReference>
<evidence type="ECO:0000305" key="1"/>
<protein>
    <recommendedName>
        <fullName>Organic hydroperoxide resistance protein-like 2</fullName>
    </recommendedName>
</protein>
<organism>
    <name type="scientific">Staphylococcus epidermidis (strain ATCC 12228 / FDA PCI 1200)</name>
    <dbReference type="NCBI Taxonomy" id="176280"/>
    <lineage>
        <taxon>Bacteria</taxon>
        <taxon>Bacillati</taxon>
        <taxon>Bacillota</taxon>
        <taxon>Bacilli</taxon>
        <taxon>Bacillales</taxon>
        <taxon>Staphylococcaceae</taxon>
        <taxon>Staphylococcus</taxon>
    </lineage>
</organism>
<sequence length="142" mass="15387">MANSIYSTTMISNGGRDGRVFSPDNTFVQNLATPKEMGGQGGNDTNPEQLFAAGYSACFNSALSLILSQNKISDANPEVEITIELLKDDTDNGFKLGADIKVTLENMSQQDAEKFVEQAHQFCPYSKATRGNIDVQLDVTAQ</sequence>
<gene>
    <name type="ordered locus">SE_2233</name>
</gene>
<accession>Q8CMV4</accession>